<accession>Q91821</accession>
<accession>Q498M1</accession>
<keyword id="KW-0053">Apoptosis</keyword>
<keyword id="KW-0067">ATP-binding</keyword>
<keyword id="KW-0131">Cell cycle</keyword>
<keyword id="KW-1003">Cell membrane</keyword>
<keyword id="KW-0418">Kinase</keyword>
<keyword id="KW-0446">Lipid-binding</keyword>
<keyword id="KW-0472">Membrane</keyword>
<keyword id="KW-0547">Nucleotide-binding</keyword>
<keyword id="KW-0597">Phosphoprotein</keyword>
<keyword id="KW-1185">Reference proteome</keyword>
<keyword id="KW-0723">Serine/threonine-protein kinase</keyword>
<keyword id="KW-0808">Transferase</keyword>
<name>MELK_XENLA</name>
<organism>
    <name type="scientific">Xenopus laevis</name>
    <name type="common">African clawed frog</name>
    <dbReference type="NCBI Taxonomy" id="8355"/>
    <lineage>
        <taxon>Eukaryota</taxon>
        <taxon>Metazoa</taxon>
        <taxon>Chordata</taxon>
        <taxon>Craniata</taxon>
        <taxon>Vertebrata</taxon>
        <taxon>Euteleostomi</taxon>
        <taxon>Amphibia</taxon>
        <taxon>Batrachia</taxon>
        <taxon>Anura</taxon>
        <taxon>Pipoidea</taxon>
        <taxon>Pipidae</taxon>
        <taxon>Xenopodinae</taxon>
        <taxon>Xenopus</taxon>
        <taxon>Xenopus</taxon>
    </lineage>
</organism>
<proteinExistence type="evidence at protein level"/>
<protein>
    <recommendedName>
        <fullName>Maternal embryonic leucine zipper kinase</fullName>
        <shortName>MELK</shortName>
        <ecNumber>2.7.11.1</ecNumber>
    </recommendedName>
    <alternativeName>
        <fullName>Protein kinase Eg3</fullName>
        <shortName>pEg3 kinase</shortName>
    </alternativeName>
</protein>
<feature type="chain" id="PRO_0000413430" description="Maternal embryonic leucine zipper kinase">
    <location>
        <begin position="1"/>
        <end position="651"/>
    </location>
</feature>
<feature type="domain" description="Protein kinase" evidence="2">
    <location>
        <begin position="13"/>
        <end position="265"/>
    </location>
</feature>
<feature type="domain" description="KA1" evidence="3">
    <location>
        <begin position="602"/>
        <end position="651"/>
    </location>
</feature>
<feature type="region of interest" description="UBA-like" evidence="1">
    <location>
        <begin position="284"/>
        <end position="323"/>
    </location>
</feature>
<feature type="region of interest" description="Autoinhibitory region" evidence="1">
    <location>
        <begin position="328"/>
        <end position="651"/>
    </location>
</feature>
<feature type="region of interest" description="Disordered" evidence="5">
    <location>
        <begin position="410"/>
        <end position="490"/>
    </location>
</feature>
<feature type="compositionally biased region" description="Basic and acidic residues" evidence="5">
    <location>
        <begin position="423"/>
        <end position="441"/>
    </location>
</feature>
<feature type="compositionally biased region" description="Basic and acidic residues" evidence="5">
    <location>
        <begin position="471"/>
        <end position="483"/>
    </location>
</feature>
<feature type="active site" description="Proton acceptor" evidence="2 4">
    <location>
        <position position="134"/>
    </location>
</feature>
<feature type="binding site" evidence="2">
    <location>
        <begin position="19"/>
        <end position="27"/>
    </location>
    <ligand>
        <name>ATP</name>
        <dbReference type="ChEBI" id="CHEBI:30616"/>
    </ligand>
</feature>
<feature type="binding site" evidence="2">
    <location>
        <position position="42"/>
    </location>
    <ligand>
        <name>ATP</name>
        <dbReference type="ChEBI" id="CHEBI:30616"/>
    </ligand>
</feature>
<feature type="modified residue" description="Phosphothreonine; by autocatalysis" evidence="1">
    <location>
        <position position="169"/>
    </location>
</feature>
<feature type="modified residue" description="Phosphoserine; by autocatalysis" evidence="1">
    <location>
        <position position="173"/>
    </location>
</feature>
<feature type="modified residue" description="Phosphothreonine" evidence="8">
    <location>
        <position position="414"/>
    </location>
</feature>
<feature type="modified residue" description="Phosphothreonine" evidence="8">
    <location>
        <position position="449"/>
    </location>
</feature>
<feature type="modified residue" description="Phosphothreonine" evidence="8">
    <location>
        <position position="451"/>
    </location>
</feature>
<feature type="modified residue" description="Phosphothreonine" evidence="12">
    <location>
        <position position="481"/>
    </location>
</feature>
<feature type="modified residue" description="Phosphothreonine" evidence="12">
    <location>
        <position position="483"/>
    </location>
</feature>
<feature type="modified residue" description="Phosphoserine" evidence="8">
    <location>
        <position position="498"/>
    </location>
</feature>
<feature type="modified residue" description="Phosphoserine" evidence="12">
    <location>
        <position position="505"/>
    </location>
</feature>
<feature type="modified residue" description="Phosphoserine" evidence="12">
    <location>
        <position position="517"/>
    </location>
</feature>
<sequence length="651" mass="74307">MAVDDYEELLKYYELHETVGTGGFAKVKLASHLITGEKVAIKIMDKESLGDDLPRVKTEIDAMKNLSHQHVCRLYHVIETPKKIFMVLEYCPGGELFDYIIAKDRLTEEEARVFFRQIVSAVAYIHSQGYAHRDLKPENLLIDEDQNLKLIDFGLCAKPKGGLDYHLMTCCGSPAYAAPELIQGKAYIGSEADIWSMGVLMYALMCGYLPFDDDNVMVLYKKIMRGKYEIPKWLSPGSVLLLSQMMQVDPKKRITVKHLLNHPWLMHGYSCPVEWQSKYPLGYIDEDCVTELSVFYKYSRTSTTRLISEWSYDHITASYLLLHSKKSHGKAVRLKHPLAVGDQAVTSFKELRPKSKLDFEEPNGEIAYVFGSMDFSDEELFSEDFTYSSFEPHTPKEYVKGRLEFNSVDSAPATPVVQRNARHKNEDKENSNTAVARDENVFLHPAPWTPTPRRKQNEKKGILTTPNKNTQTKEKNQSKETPTKKPIGTGEEFANVISPERRCRSVELDLNQAHIDSAQKKKGAKVFGSLERGLDKMITMLTPSKRKGYTREGPRKLRAHYNVTTTNIVNPEQLLNQIVRVLPSKNVDYVQKGYTLKCKTQSDFGKVTMQFELEVCQLSKSEVVGIRRQRLKGDAWVYKRLVEDILSSCKV</sequence>
<gene>
    <name type="primary">melk</name>
</gene>
<reference key="1">
    <citation type="submission" date="1992-10" db="EMBL/GenBank/DDBJ databases">
        <title>Eg3, selected by differential screening encodes a new Xenopus protein kinase.</title>
        <authorList>
            <person name="Roghi C."/>
            <person name="Le Guellec R."/>
            <person name="Paris J."/>
            <person name="Couturier A."/>
            <person name="Philippe M."/>
        </authorList>
    </citation>
    <scope>NUCLEOTIDE SEQUENCE [MRNA]</scope>
    <source>
        <tissue>Egg</tissue>
    </source>
</reference>
<reference key="2">
    <citation type="submission" date="2005-10" db="EMBL/GenBank/DDBJ databases">
        <authorList>
            <consortium name="NIH - Xenopus Gene Collection (XGC) project"/>
        </authorList>
    </citation>
    <scope>NUCLEOTIDE SEQUENCE [LARGE SCALE MRNA]</scope>
    <source>
        <tissue>Embryo</tissue>
        <tissue>Oocyte</tissue>
    </source>
</reference>
<reference key="3">
    <citation type="journal article" date="2002" name="Dev. Biol.">
        <title>Cell cycle regulation of pEg3, a new Xenopus protein kinase of the KIN1/PAR-1/MARK family.</title>
        <authorList>
            <person name="Blot J."/>
            <person name="Chartrain I."/>
            <person name="Roghi C."/>
            <person name="Philippe M."/>
            <person name="Tassan J.P."/>
        </authorList>
    </citation>
    <scope>PHOSPHORYLATION</scope>
</reference>
<reference key="4">
    <citation type="journal article" date="2006" name="Biol. Cell">
        <title>Cell-cycle-dependent cortical localization of pEg3 protein kinase in Xenopus and human cells.</title>
        <authorList>
            <person name="Chartrain I."/>
            <person name="Couturier A."/>
            <person name="Tassan J.P."/>
        </authorList>
    </citation>
    <scope>SUBCELLULAR LOCATION</scope>
</reference>
<reference key="5">
    <citation type="journal article" date="2006" name="Cell Cycle">
        <title>M-phase MELK activity is regulated by MPF and MAPK.</title>
        <authorList>
            <person name="Badouel C."/>
            <person name="Korner R."/>
            <person name="Frank-Vaillant M."/>
            <person name="Couturier A."/>
            <person name="Nigg E.A."/>
            <person name="Tassan J.P."/>
        </authorList>
    </citation>
    <scope>PHOSPHORYLATION AT THR-414; THR-449; THR-451; THR-481; THR-483; SER-498; SER-505 AND SER-517</scope>
</reference>
<reference key="6">
    <citation type="journal article" date="2010" name="Exp. Cell Res.">
        <title>Maternal embryonic leucine zipper kinase is stabilized in mitosis by phosphorylation and is partially degraded upon mitotic exit.</title>
        <authorList>
            <person name="Badouel C."/>
            <person name="Chartrain I."/>
            <person name="Blot J."/>
            <person name="Tassan J.P."/>
        </authorList>
    </citation>
    <scope>PHOSPHORYLATION</scope>
    <scope>PROTEIN DEGRADATION</scope>
</reference>
<reference key="7">
    <citation type="journal article" date="2011" name="J. Cell Sci.">
        <title>A functional analysis of MELK in cell division reveals a transition in the mode of cytokinesis during Xenopus development.</title>
        <authorList>
            <person name="Le Page Y."/>
            <person name="Chartrain I."/>
            <person name="Badouel C."/>
            <person name="Tassan J.P."/>
        </authorList>
    </citation>
    <scope>FUNCTION</scope>
    <scope>SUBCELLULAR LOCATION</scope>
</reference>
<evidence type="ECO:0000250" key="1"/>
<evidence type="ECO:0000255" key="2">
    <source>
        <dbReference type="PROSITE-ProRule" id="PRU00159"/>
    </source>
</evidence>
<evidence type="ECO:0000255" key="3">
    <source>
        <dbReference type="PROSITE-ProRule" id="PRU00565"/>
    </source>
</evidence>
<evidence type="ECO:0000255" key="4">
    <source>
        <dbReference type="PROSITE-ProRule" id="PRU10027"/>
    </source>
</evidence>
<evidence type="ECO:0000256" key="5">
    <source>
        <dbReference type="SAM" id="MobiDB-lite"/>
    </source>
</evidence>
<evidence type="ECO:0000269" key="6">
    <source>
    </source>
</evidence>
<evidence type="ECO:0000269" key="7">
    <source>
    </source>
</evidence>
<evidence type="ECO:0000269" key="8">
    <source>
    </source>
</evidence>
<evidence type="ECO:0000269" key="9">
    <source>
    </source>
</evidence>
<evidence type="ECO:0000269" key="10">
    <source>
    </source>
</evidence>
<evidence type="ECO:0000305" key="11"/>
<evidence type="ECO:0000305" key="12">
    <source>
    </source>
</evidence>
<comment type="function">
    <text evidence="1 10">Serine/threonine-protein kinase involved in various processes such as cell cycle regulation, self-renewal of stem cells, apoptosis and splicing regulation. Also plays a role in primitive hematopoiesis, possibly by affecting the expression of genes critical for hematopoiesis (By similarity). Plays a role in cytokinesis during early development.</text>
</comment>
<comment type="catalytic activity">
    <reaction>
        <text>L-seryl-[protein] + ATP = O-phospho-L-seryl-[protein] + ADP + H(+)</text>
        <dbReference type="Rhea" id="RHEA:17989"/>
        <dbReference type="Rhea" id="RHEA-COMP:9863"/>
        <dbReference type="Rhea" id="RHEA-COMP:11604"/>
        <dbReference type="ChEBI" id="CHEBI:15378"/>
        <dbReference type="ChEBI" id="CHEBI:29999"/>
        <dbReference type="ChEBI" id="CHEBI:30616"/>
        <dbReference type="ChEBI" id="CHEBI:83421"/>
        <dbReference type="ChEBI" id="CHEBI:456216"/>
        <dbReference type="EC" id="2.7.11.1"/>
    </reaction>
</comment>
<comment type="catalytic activity">
    <reaction>
        <text>L-threonyl-[protein] + ATP = O-phospho-L-threonyl-[protein] + ADP + H(+)</text>
        <dbReference type="Rhea" id="RHEA:46608"/>
        <dbReference type="Rhea" id="RHEA-COMP:11060"/>
        <dbReference type="Rhea" id="RHEA-COMP:11605"/>
        <dbReference type="ChEBI" id="CHEBI:15378"/>
        <dbReference type="ChEBI" id="CHEBI:30013"/>
        <dbReference type="ChEBI" id="CHEBI:30616"/>
        <dbReference type="ChEBI" id="CHEBI:61977"/>
        <dbReference type="ChEBI" id="CHEBI:456216"/>
        <dbReference type="EC" id="2.7.11.1"/>
    </reaction>
</comment>
<comment type="activity regulation">
    <text evidence="1">Activated by autophosphorylation of the T-loop at Thr-169 and Ser-173: in contrast to other members of the SNF1 subfamily, phosphorylation at Thr-169 is not mediated by STK11/LKB1 but via autophosphorylation instead.</text>
</comment>
<comment type="subcellular location">
    <subcellularLocation>
        <location evidence="7 10">Cell membrane</location>
        <topology evidence="7 10">Peripheral membrane protein</topology>
    </subcellularLocation>
</comment>
<comment type="domain">
    <text evidence="1">The KA1 domain mediates binding to phospholipids and targeting to membranes.</text>
</comment>
<comment type="PTM">
    <text evidence="1 6 8 9">Autophosphorylated: autophosphorylation of the T-loop at Thr-169 and Ser-173 is required for activation (By similarity). Phosphorylated by the maturation promoting factor (MPF), composed of cdk1 and a cyclin-B. Also phosphorylated by some MAPK. Phosphorylated during oocyte maturation. Dephosphorylation destabilizes the protein. There is some ambiguity for some phosphosites: Thr-481/Thr-483 and Ser-505/Ser-517.</text>
</comment>
<comment type="PTM">
    <text evidence="9">Degraded when cells exit mitosis.</text>
</comment>
<comment type="similarity">
    <text evidence="11">Belongs to the protein kinase superfamily. CAMK Ser/Thr protein kinase family. SNF1 subfamily.</text>
</comment>
<comment type="sequence caution" evidence="11">
    <conflict type="miscellaneous discrepancy">
        <sequence resource="EMBL-CDS" id="AAI00162"/>
    </conflict>
    <text>Contaminating sequence. Potential poly-A sequence.</text>
</comment>
<dbReference type="EC" id="2.7.11.1"/>
<dbReference type="EMBL" id="Z17205">
    <property type="protein sequence ID" value="CAA78913.2"/>
    <property type="molecule type" value="mRNA"/>
</dbReference>
<dbReference type="EMBL" id="BC106635">
    <property type="protein sequence ID" value="AAI06636.1"/>
    <property type="molecule type" value="mRNA"/>
</dbReference>
<dbReference type="EMBL" id="BC100161">
    <property type="protein sequence ID" value="AAI00162.1"/>
    <property type="status" value="ALT_SEQ"/>
    <property type="molecule type" value="mRNA"/>
</dbReference>
<dbReference type="PIR" id="S52244">
    <property type="entry name" value="S52244"/>
</dbReference>
<dbReference type="RefSeq" id="NP_001081569.1">
    <property type="nucleotide sequence ID" value="NM_001088100.2"/>
</dbReference>
<dbReference type="RefSeq" id="XP_018087768.1">
    <property type="nucleotide sequence ID" value="XM_018232279.1"/>
</dbReference>
<dbReference type="SMR" id="Q91821"/>
<dbReference type="BioGRID" id="99263">
    <property type="interactions" value="2"/>
</dbReference>
<dbReference type="IntAct" id="Q91821">
    <property type="interactions" value="1"/>
</dbReference>
<dbReference type="iPTMnet" id="Q91821"/>
<dbReference type="DNASU" id="397927"/>
<dbReference type="GeneID" id="397927"/>
<dbReference type="KEGG" id="xla:397927"/>
<dbReference type="AGR" id="Xenbase:XB-GENE-987660"/>
<dbReference type="CTD" id="397927"/>
<dbReference type="Xenbase" id="XB-GENE-987660">
    <property type="gene designation" value="melk.L"/>
</dbReference>
<dbReference type="OMA" id="NVCTPKS"/>
<dbReference type="OrthoDB" id="193931at2759"/>
<dbReference type="Proteomes" id="UP000186698">
    <property type="component" value="Chromosome 1L"/>
</dbReference>
<dbReference type="Bgee" id="397927">
    <property type="expression patterns" value="Expressed in egg cell and 16 other cell types or tissues"/>
</dbReference>
<dbReference type="GO" id="GO:0005938">
    <property type="term" value="C:cell cortex"/>
    <property type="evidence" value="ECO:0000314"/>
    <property type="project" value="UniProtKB"/>
</dbReference>
<dbReference type="GO" id="GO:0005737">
    <property type="term" value="C:cytoplasm"/>
    <property type="evidence" value="ECO:0000318"/>
    <property type="project" value="GO_Central"/>
</dbReference>
<dbReference type="GO" id="GO:0005886">
    <property type="term" value="C:plasma membrane"/>
    <property type="evidence" value="ECO:0007669"/>
    <property type="project" value="UniProtKB-SubCell"/>
</dbReference>
<dbReference type="GO" id="GO:0005524">
    <property type="term" value="F:ATP binding"/>
    <property type="evidence" value="ECO:0007669"/>
    <property type="project" value="UniProtKB-KW"/>
</dbReference>
<dbReference type="GO" id="GO:0005509">
    <property type="term" value="F:calcium ion binding"/>
    <property type="evidence" value="ECO:0000250"/>
    <property type="project" value="UniProtKB"/>
</dbReference>
<dbReference type="GO" id="GO:0008289">
    <property type="term" value="F:lipid binding"/>
    <property type="evidence" value="ECO:0007669"/>
    <property type="project" value="UniProtKB-KW"/>
</dbReference>
<dbReference type="GO" id="GO:0004715">
    <property type="term" value="F:non-membrane spanning protein tyrosine kinase activity"/>
    <property type="evidence" value="ECO:0000250"/>
    <property type="project" value="UniProtKB"/>
</dbReference>
<dbReference type="GO" id="GO:0106310">
    <property type="term" value="F:protein serine kinase activity"/>
    <property type="evidence" value="ECO:0007669"/>
    <property type="project" value="RHEA"/>
</dbReference>
<dbReference type="GO" id="GO:0004674">
    <property type="term" value="F:protein serine/threonine kinase activity"/>
    <property type="evidence" value="ECO:0000250"/>
    <property type="project" value="UniProtKB"/>
</dbReference>
<dbReference type="GO" id="GO:0006915">
    <property type="term" value="P:apoptotic process"/>
    <property type="evidence" value="ECO:0000250"/>
    <property type="project" value="UniProtKB"/>
</dbReference>
<dbReference type="GO" id="GO:0008283">
    <property type="term" value="P:cell population proliferation"/>
    <property type="evidence" value="ECO:0000250"/>
    <property type="project" value="UniProtKB"/>
</dbReference>
<dbReference type="GO" id="GO:0030097">
    <property type="term" value="P:hemopoiesis"/>
    <property type="evidence" value="ECO:0000250"/>
    <property type="project" value="UniProtKB"/>
</dbReference>
<dbReference type="GO" id="GO:0035556">
    <property type="term" value="P:intracellular signal transduction"/>
    <property type="evidence" value="ECO:0000318"/>
    <property type="project" value="GO_Central"/>
</dbReference>
<dbReference type="GO" id="GO:0061351">
    <property type="term" value="P:neural precursor cell proliferation"/>
    <property type="evidence" value="ECO:0000250"/>
    <property type="project" value="UniProtKB"/>
</dbReference>
<dbReference type="GO" id="GO:0043065">
    <property type="term" value="P:positive regulation of apoptotic process"/>
    <property type="evidence" value="ECO:0000250"/>
    <property type="project" value="UniProtKB"/>
</dbReference>
<dbReference type="GO" id="GO:0046777">
    <property type="term" value="P:protein autophosphorylation"/>
    <property type="evidence" value="ECO:0000250"/>
    <property type="project" value="UniProtKB"/>
</dbReference>
<dbReference type="CDD" id="cd12198">
    <property type="entry name" value="MELK_C"/>
    <property type="match status" value="1"/>
</dbReference>
<dbReference type="CDD" id="cd14078">
    <property type="entry name" value="STKc_MELK"/>
    <property type="match status" value="1"/>
</dbReference>
<dbReference type="CDD" id="cd14341">
    <property type="entry name" value="UBA_MELK"/>
    <property type="match status" value="1"/>
</dbReference>
<dbReference type="FunFam" id="1.10.510.10:FF:000901">
    <property type="entry name" value="Maternal embryonic leucine zipper kinase"/>
    <property type="match status" value="1"/>
</dbReference>
<dbReference type="FunFam" id="3.30.200.20:FF:000003">
    <property type="entry name" value="Non-specific serine/threonine protein kinase"/>
    <property type="match status" value="1"/>
</dbReference>
<dbReference type="FunFam" id="3.30.310.80:FF:000004">
    <property type="entry name" value="Non-specific serine/threonine protein kinase"/>
    <property type="match status" value="1"/>
</dbReference>
<dbReference type="Gene3D" id="3.30.310.80">
    <property type="entry name" value="Kinase associated domain 1, KA1"/>
    <property type="match status" value="1"/>
</dbReference>
<dbReference type="Gene3D" id="1.10.510.10">
    <property type="entry name" value="Transferase(Phosphotransferase) domain 1"/>
    <property type="match status" value="1"/>
</dbReference>
<dbReference type="InterPro" id="IPR028375">
    <property type="entry name" value="KA1/Ssp2_C"/>
</dbReference>
<dbReference type="InterPro" id="IPR001772">
    <property type="entry name" value="KA1_dom"/>
</dbReference>
<dbReference type="InterPro" id="IPR011009">
    <property type="entry name" value="Kinase-like_dom_sf"/>
</dbReference>
<dbReference type="InterPro" id="IPR034673">
    <property type="entry name" value="MELK"/>
</dbReference>
<dbReference type="InterPro" id="IPR048637">
    <property type="entry name" value="MELK_UBA"/>
</dbReference>
<dbReference type="InterPro" id="IPR000719">
    <property type="entry name" value="Prot_kinase_dom"/>
</dbReference>
<dbReference type="InterPro" id="IPR017441">
    <property type="entry name" value="Protein_kinase_ATP_BS"/>
</dbReference>
<dbReference type="InterPro" id="IPR008271">
    <property type="entry name" value="Ser/Thr_kinase_AS"/>
</dbReference>
<dbReference type="PANTHER" id="PTHR24346">
    <property type="entry name" value="MAP/MICROTUBULE AFFINITY-REGULATING KINASE"/>
    <property type="match status" value="1"/>
</dbReference>
<dbReference type="PANTHER" id="PTHR24346:SF30">
    <property type="entry name" value="MATERNAL EMBRYONIC LEUCINE ZIPPER KINASE"/>
    <property type="match status" value="1"/>
</dbReference>
<dbReference type="Pfam" id="PF02149">
    <property type="entry name" value="KA1"/>
    <property type="match status" value="1"/>
</dbReference>
<dbReference type="Pfam" id="PF00069">
    <property type="entry name" value="Pkinase"/>
    <property type="match status" value="1"/>
</dbReference>
<dbReference type="Pfam" id="PF21594">
    <property type="entry name" value="UBA_MELK"/>
    <property type="match status" value="1"/>
</dbReference>
<dbReference type="SMART" id="SM00220">
    <property type="entry name" value="S_TKc"/>
    <property type="match status" value="1"/>
</dbReference>
<dbReference type="SUPFAM" id="SSF103243">
    <property type="entry name" value="KA1-like"/>
    <property type="match status" value="1"/>
</dbReference>
<dbReference type="SUPFAM" id="SSF56112">
    <property type="entry name" value="Protein kinase-like (PK-like)"/>
    <property type="match status" value="1"/>
</dbReference>
<dbReference type="PROSITE" id="PS50032">
    <property type="entry name" value="KA1"/>
    <property type="match status" value="1"/>
</dbReference>
<dbReference type="PROSITE" id="PS00107">
    <property type="entry name" value="PROTEIN_KINASE_ATP"/>
    <property type="match status" value="1"/>
</dbReference>
<dbReference type="PROSITE" id="PS50011">
    <property type="entry name" value="PROTEIN_KINASE_DOM"/>
    <property type="match status" value="1"/>
</dbReference>
<dbReference type="PROSITE" id="PS00108">
    <property type="entry name" value="PROTEIN_KINASE_ST"/>
    <property type="match status" value="1"/>
</dbReference>